<keyword id="KW-0963">Cytoplasm</keyword>
<keyword id="KW-0378">Hydrolase</keyword>
<keyword id="KW-0694">RNA-binding</keyword>
<keyword id="KW-0820">tRNA-binding</keyword>
<comment type="function">
    <text evidence="1">Hydrolyzes ribosome-free peptidyl-tRNAs (with 1 or more amino acids incorporated), which drop off the ribosome during protein synthesis, or as a result of ribosome stalling.</text>
</comment>
<comment type="function">
    <text evidence="1">Catalyzes the release of premature peptidyl moieties from peptidyl-tRNA molecules trapped in stalled 50S ribosomal subunits, and thus maintains levels of free tRNAs and 50S ribosomes.</text>
</comment>
<comment type="catalytic activity">
    <reaction evidence="1">
        <text>an N-acyl-L-alpha-aminoacyl-tRNA + H2O = an N-acyl-L-amino acid + a tRNA + H(+)</text>
        <dbReference type="Rhea" id="RHEA:54448"/>
        <dbReference type="Rhea" id="RHEA-COMP:10123"/>
        <dbReference type="Rhea" id="RHEA-COMP:13883"/>
        <dbReference type="ChEBI" id="CHEBI:15377"/>
        <dbReference type="ChEBI" id="CHEBI:15378"/>
        <dbReference type="ChEBI" id="CHEBI:59874"/>
        <dbReference type="ChEBI" id="CHEBI:78442"/>
        <dbReference type="ChEBI" id="CHEBI:138191"/>
        <dbReference type="EC" id="3.1.1.29"/>
    </reaction>
</comment>
<comment type="subunit">
    <text evidence="1">Monomer.</text>
</comment>
<comment type="subcellular location">
    <subcellularLocation>
        <location evidence="1">Cytoplasm</location>
    </subcellularLocation>
</comment>
<comment type="similarity">
    <text evidence="1">Belongs to the PTH family.</text>
</comment>
<proteinExistence type="inferred from homology"/>
<evidence type="ECO:0000255" key="1">
    <source>
        <dbReference type="HAMAP-Rule" id="MF_00083"/>
    </source>
</evidence>
<organism>
    <name type="scientific">Salmonella enteritidis PT4 (strain P125109)</name>
    <dbReference type="NCBI Taxonomy" id="550537"/>
    <lineage>
        <taxon>Bacteria</taxon>
        <taxon>Pseudomonadati</taxon>
        <taxon>Pseudomonadota</taxon>
        <taxon>Gammaproteobacteria</taxon>
        <taxon>Enterobacterales</taxon>
        <taxon>Enterobacteriaceae</taxon>
        <taxon>Salmonella</taxon>
    </lineage>
</organism>
<name>PTH_SALEP</name>
<accession>B5R3J2</accession>
<feature type="chain" id="PRO_1000092980" description="Peptidyl-tRNA hydrolase">
    <location>
        <begin position="1"/>
        <end position="194"/>
    </location>
</feature>
<feature type="active site" description="Proton acceptor" evidence="1">
    <location>
        <position position="21"/>
    </location>
</feature>
<feature type="binding site" evidence="1">
    <location>
        <position position="16"/>
    </location>
    <ligand>
        <name>tRNA</name>
        <dbReference type="ChEBI" id="CHEBI:17843"/>
    </ligand>
</feature>
<feature type="binding site" evidence="1">
    <location>
        <position position="67"/>
    </location>
    <ligand>
        <name>tRNA</name>
        <dbReference type="ChEBI" id="CHEBI:17843"/>
    </ligand>
</feature>
<feature type="binding site" evidence="1">
    <location>
        <position position="69"/>
    </location>
    <ligand>
        <name>tRNA</name>
        <dbReference type="ChEBI" id="CHEBI:17843"/>
    </ligand>
</feature>
<feature type="binding site" evidence="1">
    <location>
        <position position="115"/>
    </location>
    <ligand>
        <name>tRNA</name>
        <dbReference type="ChEBI" id="CHEBI:17843"/>
    </ligand>
</feature>
<feature type="site" description="Discriminates between blocked and unblocked aminoacyl-tRNA" evidence="1">
    <location>
        <position position="11"/>
    </location>
</feature>
<feature type="site" description="Stabilizes the basic form of H active site to accept a proton" evidence="1">
    <location>
        <position position="94"/>
    </location>
</feature>
<sequence>MAIKLIVGLANPGAEYAATRHNAGAWYVDLLAERLRAPLREEPKFFGYTSRITLEGEDVRLLVPTTFMNLSGKAVGAMASFYRIQPDEILVAHDELDLPPGVAKFKLGGGHGGHNGLKDIISKLGNNPNFHRLRVGIGHPGDKNKVVGFVLGKPPVSEQKLIDEAIDEAARCTELWFKEGLAKATSRLHTFKAQ</sequence>
<gene>
    <name evidence="1" type="primary">pth</name>
    <name type="ordered locus">SEN1256</name>
</gene>
<reference key="1">
    <citation type="journal article" date="2008" name="Genome Res.">
        <title>Comparative genome analysis of Salmonella enteritidis PT4 and Salmonella gallinarum 287/91 provides insights into evolutionary and host adaptation pathways.</title>
        <authorList>
            <person name="Thomson N.R."/>
            <person name="Clayton D.J."/>
            <person name="Windhorst D."/>
            <person name="Vernikos G."/>
            <person name="Davidson S."/>
            <person name="Churcher C."/>
            <person name="Quail M.A."/>
            <person name="Stevens M."/>
            <person name="Jones M.A."/>
            <person name="Watson M."/>
            <person name="Barron A."/>
            <person name="Layton A."/>
            <person name="Pickard D."/>
            <person name="Kingsley R.A."/>
            <person name="Bignell A."/>
            <person name="Clark L."/>
            <person name="Harris B."/>
            <person name="Ormond D."/>
            <person name="Abdellah Z."/>
            <person name="Brooks K."/>
            <person name="Cherevach I."/>
            <person name="Chillingworth T."/>
            <person name="Woodward J."/>
            <person name="Norberczak H."/>
            <person name="Lord A."/>
            <person name="Arrowsmith C."/>
            <person name="Jagels K."/>
            <person name="Moule S."/>
            <person name="Mungall K."/>
            <person name="Saunders M."/>
            <person name="Whitehead S."/>
            <person name="Chabalgoity J.A."/>
            <person name="Maskell D."/>
            <person name="Humphreys T."/>
            <person name="Roberts M."/>
            <person name="Barrow P.A."/>
            <person name="Dougan G."/>
            <person name="Parkhill J."/>
        </authorList>
    </citation>
    <scope>NUCLEOTIDE SEQUENCE [LARGE SCALE GENOMIC DNA]</scope>
    <source>
        <strain>P125109</strain>
    </source>
</reference>
<dbReference type="EC" id="3.1.1.29" evidence="1"/>
<dbReference type="EMBL" id="AM933172">
    <property type="protein sequence ID" value="CAR32834.1"/>
    <property type="molecule type" value="Genomic_DNA"/>
</dbReference>
<dbReference type="RefSeq" id="WP_000985595.1">
    <property type="nucleotide sequence ID" value="NC_011294.1"/>
</dbReference>
<dbReference type="SMR" id="B5R3J2"/>
<dbReference type="KEGG" id="set:SEN1256"/>
<dbReference type="HOGENOM" id="CLU_062456_3_1_6"/>
<dbReference type="Proteomes" id="UP000000613">
    <property type="component" value="Chromosome"/>
</dbReference>
<dbReference type="GO" id="GO:0005737">
    <property type="term" value="C:cytoplasm"/>
    <property type="evidence" value="ECO:0007669"/>
    <property type="project" value="UniProtKB-SubCell"/>
</dbReference>
<dbReference type="GO" id="GO:0004045">
    <property type="term" value="F:peptidyl-tRNA hydrolase activity"/>
    <property type="evidence" value="ECO:0007669"/>
    <property type="project" value="UniProtKB-UniRule"/>
</dbReference>
<dbReference type="GO" id="GO:0000049">
    <property type="term" value="F:tRNA binding"/>
    <property type="evidence" value="ECO:0007669"/>
    <property type="project" value="UniProtKB-UniRule"/>
</dbReference>
<dbReference type="GO" id="GO:0006515">
    <property type="term" value="P:protein quality control for misfolded or incompletely synthesized proteins"/>
    <property type="evidence" value="ECO:0007669"/>
    <property type="project" value="UniProtKB-UniRule"/>
</dbReference>
<dbReference type="GO" id="GO:0072344">
    <property type="term" value="P:rescue of stalled ribosome"/>
    <property type="evidence" value="ECO:0007669"/>
    <property type="project" value="UniProtKB-UniRule"/>
</dbReference>
<dbReference type="CDD" id="cd00462">
    <property type="entry name" value="PTH"/>
    <property type="match status" value="1"/>
</dbReference>
<dbReference type="FunFam" id="3.40.50.1470:FF:000001">
    <property type="entry name" value="Peptidyl-tRNA hydrolase"/>
    <property type="match status" value="1"/>
</dbReference>
<dbReference type="Gene3D" id="3.40.50.1470">
    <property type="entry name" value="Peptidyl-tRNA hydrolase"/>
    <property type="match status" value="1"/>
</dbReference>
<dbReference type="HAMAP" id="MF_00083">
    <property type="entry name" value="Pept_tRNA_hydro_bact"/>
    <property type="match status" value="1"/>
</dbReference>
<dbReference type="InterPro" id="IPR001328">
    <property type="entry name" value="Pept_tRNA_hydro"/>
</dbReference>
<dbReference type="InterPro" id="IPR018171">
    <property type="entry name" value="Pept_tRNA_hydro_CS"/>
</dbReference>
<dbReference type="InterPro" id="IPR036416">
    <property type="entry name" value="Pept_tRNA_hydro_sf"/>
</dbReference>
<dbReference type="NCBIfam" id="TIGR00447">
    <property type="entry name" value="pth"/>
    <property type="match status" value="1"/>
</dbReference>
<dbReference type="PANTHER" id="PTHR17224">
    <property type="entry name" value="PEPTIDYL-TRNA HYDROLASE"/>
    <property type="match status" value="1"/>
</dbReference>
<dbReference type="PANTHER" id="PTHR17224:SF1">
    <property type="entry name" value="PEPTIDYL-TRNA HYDROLASE"/>
    <property type="match status" value="1"/>
</dbReference>
<dbReference type="Pfam" id="PF01195">
    <property type="entry name" value="Pept_tRNA_hydro"/>
    <property type="match status" value="1"/>
</dbReference>
<dbReference type="SUPFAM" id="SSF53178">
    <property type="entry name" value="Peptidyl-tRNA hydrolase-like"/>
    <property type="match status" value="1"/>
</dbReference>
<dbReference type="PROSITE" id="PS01195">
    <property type="entry name" value="PEPT_TRNA_HYDROL_1"/>
    <property type="match status" value="1"/>
</dbReference>
<dbReference type="PROSITE" id="PS01196">
    <property type="entry name" value="PEPT_TRNA_HYDROL_2"/>
    <property type="match status" value="1"/>
</dbReference>
<protein>
    <recommendedName>
        <fullName evidence="1">Peptidyl-tRNA hydrolase</fullName>
        <shortName evidence="1">Pth</shortName>
        <ecNumber evidence="1">3.1.1.29</ecNumber>
    </recommendedName>
</protein>